<sequence>MDLQQQPLFRQKALVAGQWCDADNAEKTPIFNPATQELIGYVPNMGRAETERAIEAAYASWEMWKTKTAKERSALLKKWYDLILLNLDVLAEILTTEQGKPFNEAKGEIIYAASFIEWFAEEAKRIYGDIIPSPYPDARIVVNKQPIGVVAAITPWNFPAAMITRKVAPALAAGCPCIVKPAPETPFTALALADLAIQAGIPAEIMSVVTGDAAQIGDAIFASDHVRKFTFTGSTPIGKLLLEKSAKTLKKVSLELGGNAPFIVFDDADIEAAVEGALIAKFRNAGQTCVCVNRFLVQSGVYEKFIQVFKAKIESLKIGNGLEAGSEIGPLINAQAVAKVQSHIEDALSKNGRLITGGQVHATGELFFEPTLIADANTEMMVATQETFGPLAAIFKFDTEQQAIQMANDTEFGLAAYCYTRDLGRAWRMSEQLEYGMVGINKGLISNEVAPFGGIKHSGLGREGSKYGIEDYLEIKYTLFGGL</sequence>
<dbReference type="EC" id="1.2.1.24" evidence="2"/>
<dbReference type="EMBL" id="CR543861">
    <property type="protein sequence ID" value="CAG69304.1"/>
    <property type="molecule type" value="Genomic_DNA"/>
</dbReference>
<dbReference type="RefSeq" id="WP_004928612.1">
    <property type="nucleotide sequence ID" value="NC_005966.1"/>
</dbReference>
<dbReference type="SMR" id="Q6F9G0"/>
<dbReference type="STRING" id="202950.GCA_001485005_01478"/>
<dbReference type="GeneID" id="45234823"/>
<dbReference type="KEGG" id="aci:ACIAD2539"/>
<dbReference type="eggNOG" id="COG1012">
    <property type="taxonomic scope" value="Bacteria"/>
</dbReference>
<dbReference type="HOGENOM" id="CLU_005391_5_1_6"/>
<dbReference type="OrthoDB" id="9812625at2"/>
<dbReference type="BioCyc" id="ASP62977:ACIAD_RS11530-MONOMER"/>
<dbReference type="SABIO-RK" id="Q6F9G0"/>
<dbReference type="Proteomes" id="UP000000430">
    <property type="component" value="Chromosome"/>
</dbReference>
<dbReference type="GO" id="GO:0005829">
    <property type="term" value="C:cytosol"/>
    <property type="evidence" value="ECO:0007669"/>
    <property type="project" value="TreeGrafter"/>
</dbReference>
<dbReference type="GO" id="GO:0004777">
    <property type="term" value="F:succinate-semialdehyde dehydrogenase (NAD+) activity"/>
    <property type="evidence" value="ECO:0000314"/>
    <property type="project" value="UniProtKB"/>
</dbReference>
<dbReference type="GO" id="GO:0009450">
    <property type="term" value="P:gamma-aminobutyric acid catabolic process"/>
    <property type="evidence" value="ECO:0007669"/>
    <property type="project" value="InterPro"/>
</dbReference>
<dbReference type="CDD" id="cd07103">
    <property type="entry name" value="ALDH_F5_SSADH_GabD"/>
    <property type="match status" value="1"/>
</dbReference>
<dbReference type="FunFam" id="3.40.309.10:FF:000004">
    <property type="entry name" value="Succinate-semialdehyde dehydrogenase I"/>
    <property type="match status" value="1"/>
</dbReference>
<dbReference type="FunFam" id="3.40.605.10:FF:000005">
    <property type="entry name" value="Succinate-semialdehyde dehydrogenase I"/>
    <property type="match status" value="1"/>
</dbReference>
<dbReference type="Gene3D" id="3.40.605.10">
    <property type="entry name" value="Aldehyde Dehydrogenase, Chain A, domain 1"/>
    <property type="match status" value="1"/>
</dbReference>
<dbReference type="Gene3D" id="3.40.309.10">
    <property type="entry name" value="Aldehyde Dehydrogenase, Chain A, domain 2"/>
    <property type="match status" value="1"/>
</dbReference>
<dbReference type="InterPro" id="IPR016161">
    <property type="entry name" value="Ald_DH/histidinol_DH"/>
</dbReference>
<dbReference type="InterPro" id="IPR016163">
    <property type="entry name" value="Ald_DH_C"/>
</dbReference>
<dbReference type="InterPro" id="IPR016160">
    <property type="entry name" value="Ald_DH_CS_CYS"/>
</dbReference>
<dbReference type="InterPro" id="IPR029510">
    <property type="entry name" value="Ald_DH_CS_GLU"/>
</dbReference>
<dbReference type="InterPro" id="IPR016162">
    <property type="entry name" value="Ald_DH_N"/>
</dbReference>
<dbReference type="InterPro" id="IPR015590">
    <property type="entry name" value="Aldehyde_DH_dom"/>
</dbReference>
<dbReference type="InterPro" id="IPR050740">
    <property type="entry name" value="Aldehyde_DH_Superfamily"/>
</dbReference>
<dbReference type="InterPro" id="IPR010102">
    <property type="entry name" value="Succ_semiAld_DH"/>
</dbReference>
<dbReference type="NCBIfam" id="TIGR01780">
    <property type="entry name" value="SSADH"/>
    <property type="match status" value="1"/>
</dbReference>
<dbReference type="PANTHER" id="PTHR43353">
    <property type="entry name" value="SUCCINATE-SEMIALDEHYDE DEHYDROGENASE, MITOCHONDRIAL"/>
    <property type="match status" value="1"/>
</dbReference>
<dbReference type="PANTHER" id="PTHR43353:SF5">
    <property type="entry name" value="SUCCINATE-SEMIALDEHYDE DEHYDROGENASE, MITOCHONDRIAL"/>
    <property type="match status" value="1"/>
</dbReference>
<dbReference type="Pfam" id="PF00171">
    <property type="entry name" value="Aldedh"/>
    <property type="match status" value="1"/>
</dbReference>
<dbReference type="SUPFAM" id="SSF53720">
    <property type="entry name" value="ALDH-like"/>
    <property type="match status" value="1"/>
</dbReference>
<dbReference type="PROSITE" id="PS00070">
    <property type="entry name" value="ALDEHYDE_DEHYDR_CYS"/>
    <property type="match status" value="1"/>
</dbReference>
<dbReference type="PROSITE" id="PS00687">
    <property type="entry name" value="ALDEHYDE_DEHYDR_GLU"/>
    <property type="match status" value="1"/>
</dbReference>
<gene>
    <name evidence="3" type="primary">tgnE</name>
    <name evidence="5" type="synonym">gabD</name>
    <name evidence="5" type="ordered locus">ACIAD2539</name>
</gene>
<feature type="chain" id="PRO_0000445263" description="Succinate semialdehyde dehydrogenase">
    <location>
        <begin position="1"/>
        <end position="483"/>
    </location>
</feature>
<feature type="active site" description="Proton acceptor" evidence="1">
    <location>
        <position position="255"/>
    </location>
</feature>
<feature type="active site" description="Nucleophile" evidence="1">
    <location>
        <position position="289"/>
    </location>
</feature>
<feature type="binding site" evidence="1">
    <location>
        <begin position="156"/>
        <end position="157"/>
    </location>
    <ligand>
        <name>NAD(+)</name>
        <dbReference type="ChEBI" id="CHEBI:57540"/>
    </ligand>
</feature>
<feature type="binding site" evidence="1">
    <location>
        <begin position="180"/>
        <end position="183"/>
    </location>
    <ligand>
        <name>NAD(+)</name>
        <dbReference type="ChEBI" id="CHEBI:57540"/>
    </ligand>
</feature>
<feature type="binding site" evidence="1">
    <location>
        <begin position="233"/>
        <end position="234"/>
    </location>
    <ligand>
        <name>NAD(+)</name>
        <dbReference type="ChEBI" id="CHEBI:57540"/>
    </ligand>
</feature>
<feature type="binding site" evidence="1">
    <location>
        <position position="256"/>
    </location>
    <ligand>
        <name>NAD(+)</name>
        <dbReference type="ChEBI" id="CHEBI:57540"/>
    </ligand>
</feature>
<feature type="binding site" evidence="1">
    <location>
        <position position="386"/>
    </location>
    <ligand>
        <name>NAD(+)</name>
        <dbReference type="ChEBI" id="CHEBI:57540"/>
    </ligand>
</feature>
<evidence type="ECO:0000250" key="1">
    <source>
        <dbReference type="UniProtKB" id="P25526"/>
    </source>
</evidence>
<evidence type="ECO:0000269" key="2">
    <source>
    </source>
</evidence>
<evidence type="ECO:0000303" key="3">
    <source>
    </source>
</evidence>
<evidence type="ECO:0000305" key="4"/>
<evidence type="ECO:0000312" key="5">
    <source>
        <dbReference type="EMBL" id="CAG69304.1"/>
    </source>
</evidence>
<evidence type="ECO:0000312" key="6">
    <source>
        <dbReference type="Proteomes" id="UP000000430"/>
    </source>
</evidence>
<name>TGNE_ACIAD</name>
<protein>
    <recommendedName>
        <fullName evidence="3">Succinate semialdehyde dehydrogenase</fullName>
        <shortName evidence="3">SSA dehydrogenase</shortName>
        <ecNumber evidence="2">1.2.1.24</ecNumber>
    </recommendedName>
</protein>
<reference key="1">
    <citation type="journal article" date="2004" name="Nucleic Acids Res.">
        <title>Unique features revealed by the genome sequence of Acinetobacter sp. ADP1, a versatile and naturally transformation competent bacterium.</title>
        <authorList>
            <person name="Barbe V."/>
            <person name="Vallenet D."/>
            <person name="Fonknechten N."/>
            <person name="Kreimeyer A."/>
            <person name="Oztas S."/>
            <person name="Labarre L."/>
            <person name="Cruveiller S."/>
            <person name="Robert C."/>
            <person name="Duprat S."/>
            <person name="Wincker P."/>
            <person name="Ornston L.N."/>
            <person name="Weissenbach J."/>
            <person name="Marliere P."/>
            <person name="Cohen G.N."/>
            <person name="Medigue C."/>
        </authorList>
    </citation>
    <scope>NUCLEOTIDE SEQUENCE [LARGE SCALE GENOMIC DNA]</scope>
    <source>
        <strain evidence="6">ATCC 33305 / BD413 / ADP1</strain>
    </source>
</reference>
<reference key="2">
    <citation type="journal article" date="2018" name="Proc. Natl. Acad. Sci. U.S.A.">
        <title>Elucidation of the trigonelline degradation pathway reveals previously undescribed enzymes and metabolites.</title>
        <authorList>
            <person name="Perchat N."/>
            <person name="Saaidi P.L."/>
            <person name="Darii E."/>
            <person name="Pelle C."/>
            <person name="Petit J.L."/>
            <person name="Besnard-Gonnet M."/>
            <person name="de Berardinis V."/>
            <person name="Dupont M."/>
            <person name="Gimbernat A."/>
            <person name="Salanoubat M."/>
            <person name="Fischer C."/>
            <person name="Perret A."/>
        </authorList>
    </citation>
    <scope>FUNCTION</scope>
    <scope>CATALYTIC ACTIVITY</scope>
    <scope>BIOPHYSICOCHEMICAL PROPERTIES</scope>
    <scope>SUBUNIT</scope>
    <source>
        <strain>ATCC 33305 / BD413 / ADP1</strain>
    </source>
</reference>
<accession>Q6F9G0</accession>
<keyword id="KW-0520">NAD</keyword>
<keyword id="KW-0560">Oxidoreductase</keyword>
<organism>
    <name type="scientific">Acinetobacter baylyi (strain ATCC 33305 / BD413 / ADP1)</name>
    <dbReference type="NCBI Taxonomy" id="62977"/>
    <lineage>
        <taxon>Bacteria</taxon>
        <taxon>Pseudomonadati</taxon>
        <taxon>Pseudomonadota</taxon>
        <taxon>Gammaproteobacteria</taxon>
        <taxon>Moraxellales</taxon>
        <taxon>Moraxellaceae</taxon>
        <taxon>Acinetobacter</taxon>
    </lineage>
</organism>
<comment type="function">
    <text evidence="2">Involved in the degradation of the pyridine ring of trigonelline (TG; N-methylnicotinate) into succinate and methylamine as carbon and nitrogen sources, respectively. Catalyzes the NAD(+)-dependent oxidation of succinate semialdehyde to succinate.</text>
</comment>
<comment type="catalytic activity">
    <reaction evidence="2">
        <text>succinate semialdehyde + NAD(+) + H2O = succinate + NADH + 2 H(+)</text>
        <dbReference type="Rhea" id="RHEA:13217"/>
        <dbReference type="ChEBI" id="CHEBI:15377"/>
        <dbReference type="ChEBI" id="CHEBI:15378"/>
        <dbReference type="ChEBI" id="CHEBI:30031"/>
        <dbReference type="ChEBI" id="CHEBI:57540"/>
        <dbReference type="ChEBI" id="CHEBI:57706"/>
        <dbReference type="ChEBI" id="CHEBI:57945"/>
        <dbReference type="EC" id="1.2.1.24"/>
    </reaction>
</comment>
<comment type="biophysicochemical properties">
    <kinetics>
        <KM evidence="2">72 uM for succinate semialdehyde (SSA)</KM>
        <KM evidence="2">107 uM for NAD</KM>
        <text evidence="2">kcat is 61.5 sec(-1) for NAD as substrate.</text>
    </kinetics>
</comment>
<comment type="subunit">
    <text evidence="2">Homotetramer.</text>
</comment>
<comment type="similarity">
    <text evidence="4">Belongs to the aldehyde dehydrogenase family.</text>
</comment>
<proteinExistence type="evidence at protein level"/>